<proteinExistence type="evidence at transcript level"/>
<comment type="function">
    <text evidence="3">Acts as a transcriptional activator.</text>
</comment>
<comment type="subunit">
    <text evidence="2">Forms either a homodimer or a heterodimer with a related family member.</text>
</comment>
<comment type="subcellular location">
    <subcellularLocation>
        <location evidence="3">Nucleus</location>
    </subcellularLocation>
</comment>
<comment type="similarity">
    <text evidence="6">Belongs to the COE family.</text>
</comment>
<reference key="1">
    <citation type="journal article" date="2001" name="Dev. Biol.">
        <title>Xebf3 is a regulator of neuronal differentiation during primary neurogenesis in Xenopus.</title>
        <authorList>
            <person name="Pozzoli O."/>
            <person name="Bosetti A."/>
            <person name="Croci L."/>
            <person name="Consalez G.G."/>
            <person name="Vetter M.L."/>
        </authorList>
    </citation>
    <scope>NUCLEOTIDE SEQUENCE [MRNA]</scope>
    <source>
        <tissue>Embryonic head</tissue>
    </source>
</reference>
<feature type="chain" id="PRO_0000107834" description="Transcription factor COE3">
    <location>
        <begin position="1"/>
        <end position="598"/>
    </location>
</feature>
<feature type="domain" description="IPT/TIG">
    <location>
        <begin position="264"/>
        <end position="347"/>
    </location>
</feature>
<feature type="zinc finger region" description="C5-type" evidence="4">
    <location>
        <begin position="151"/>
        <end position="170"/>
    </location>
</feature>
<feature type="region of interest" description="Disordered" evidence="5">
    <location>
        <begin position="1"/>
        <end position="23"/>
    </location>
</feature>
<feature type="region of interest" description="Interaction with DNA" evidence="1">
    <location>
        <begin position="63"/>
        <end position="66"/>
    </location>
</feature>
<feature type="region of interest" description="Interaction with DNA" evidence="1">
    <location>
        <begin position="197"/>
        <end position="204"/>
    </location>
</feature>
<feature type="region of interest" description="Interaction with DNA" evidence="1">
    <location>
        <begin position="236"/>
        <end position="239"/>
    </location>
</feature>
<feature type="region of interest" description="Disordered" evidence="5">
    <location>
        <begin position="452"/>
        <end position="483"/>
    </location>
</feature>
<feature type="site" description="Interaction with DNA" evidence="1">
    <location>
        <position position="163"/>
    </location>
</feature>
<feature type="site" description="Interaction with DNA" evidence="1">
    <location>
        <position position="172"/>
    </location>
</feature>
<gene>
    <name type="primary">coe3</name>
</gene>
<accession>O73742</accession>
<keyword id="KW-0010">Activator</keyword>
<keyword id="KW-0217">Developmental protein</keyword>
<keyword id="KW-0238">DNA-binding</keyword>
<keyword id="KW-0479">Metal-binding</keyword>
<keyword id="KW-0539">Nucleus</keyword>
<keyword id="KW-1185">Reference proteome</keyword>
<keyword id="KW-0804">Transcription</keyword>
<keyword id="KW-0805">Transcription regulation</keyword>
<keyword id="KW-0862">Zinc</keyword>
<keyword id="KW-0863">Zinc-finger</keyword>
<sequence length="598" mass="65344">MFGIQENIPRGGTTMKEEPLGGGMNPVRSWMHTAGVVDANTAAQSGVGLARAHFEKQPPSNLRKSNFFHFVLAMYDRQGQPVEIERTTFVDFVEKDKEPNSEKTNNGIHYKLQLLYSNGVRTEQDLYVRLIDSMTKQAIIYEGQDKNPEMCRVLLTHEIMCSRCCDKKSCGNRNETPSDPVIIDRFFLKFFLKCNQNCLKNAGNPRDMRRFQVVVSTTVNVDGHVLAVSDNMFVHNNSKHGRRARRLDPSEGTAPSYLENVATPCIKAISPSEGWTTGGATVIIIGDNFFDGLQVVFGTMLVWSELITPHAIRVQTPPRHIPGVVEVTLSYKSKQFCKGAPGRFVYTALNEPTIDYGFQRLQKVIPRHPGDPERLPKEVLLKRAADLVEALYGMPHNNQEIILKRAADIAEALYSVPRNHNQIPSLANTPSHSGMMGVNSFSSQLAVNVSETSQANDQVGYSRNTSSVSPRGYVPSSTPQQSNYNTVSNSMNGYGNAGMPNLGVPGSPGFLNGSSANSPYGIVPSSPTMAASSVTLPSNCSSTHGIFSFSPANVISAVKQKSAFAPVVRPQASPPPSCTSANGNGLQDMYFSPTFSKS</sequence>
<protein>
    <recommendedName>
        <fullName>Transcription factor COE3</fullName>
        <shortName>xCOE3</shortName>
    </recommendedName>
    <alternativeName>
        <fullName>Olf-1/EBF-like 2</fullName>
        <shortName>OE-2</shortName>
        <shortName>xEBF-3</shortName>
        <shortName>xOE-2</shortName>
    </alternativeName>
</protein>
<organism>
    <name type="scientific">Xenopus laevis</name>
    <name type="common">African clawed frog</name>
    <dbReference type="NCBI Taxonomy" id="8355"/>
    <lineage>
        <taxon>Eukaryota</taxon>
        <taxon>Metazoa</taxon>
        <taxon>Chordata</taxon>
        <taxon>Craniata</taxon>
        <taxon>Vertebrata</taxon>
        <taxon>Euteleostomi</taxon>
        <taxon>Amphibia</taxon>
        <taxon>Batrachia</taxon>
        <taxon>Anura</taxon>
        <taxon>Pipoidea</taxon>
        <taxon>Pipidae</taxon>
        <taxon>Xenopodinae</taxon>
        <taxon>Xenopus</taxon>
        <taxon>Xenopus</taxon>
    </lineage>
</organism>
<evidence type="ECO:0000250" key="1"/>
<evidence type="ECO:0000250" key="2">
    <source>
        <dbReference type="UniProtKB" id="O08791"/>
    </source>
</evidence>
<evidence type="ECO:0000250" key="3">
    <source>
        <dbReference type="UniProtKB" id="Q9H4W6"/>
    </source>
</evidence>
<evidence type="ECO:0000255" key="4"/>
<evidence type="ECO:0000256" key="5">
    <source>
        <dbReference type="SAM" id="MobiDB-lite"/>
    </source>
</evidence>
<evidence type="ECO:0000305" key="6"/>
<dbReference type="EMBL" id="AF040994">
    <property type="protein sequence ID" value="AAC15659.3"/>
    <property type="molecule type" value="mRNA"/>
</dbReference>
<dbReference type="RefSeq" id="NP_001083801.1">
    <property type="nucleotide sequence ID" value="NM_001090332.1"/>
</dbReference>
<dbReference type="SMR" id="O73742"/>
<dbReference type="GeneID" id="399125"/>
<dbReference type="KEGG" id="xla:399125"/>
<dbReference type="AGR" id="Xenbase:XB-GENE-962547"/>
<dbReference type="CTD" id="399125"/>
<dbReference type="Xenbase" id="XB-GENE-962547">
    <property type="gene designation" value="ebf3.L"/>
</dbReference>
<dbReference type="OrthoDB" id="25246at2759"/>
<dbReference type="Proteomes" id="UP000186698">
    <property type="component" value="Chromosome 7L"/>
</dbReference>
<dbReference type="Bgee" id="399125">
    <property type="expression patterns" value="Expressed in internal ear and 6 other cell types or tissues"/>
</dbReference>
<dbReference type="GO" id="GO:0005634">
    <property type="term" value="C:nucleus"/>
    <property type="evidence" value="ECO:0000250"/>
    <property type="project" value="UniProtKB"/>
</dbReference>
<dbReference type="GO" id="GO:0000981">
    <property type="term" value="F:DNA-binding transcription factor activity, RNA polymerase II-specific"/>
    <property type="evidence" value="ECO:0000318"/>
    <property type="project" value="GO_Central"/>
</dbReference>
<dbReference type="GO" id="GO:0000978">
    <property type="term" value="F:RNA polymerase II cis-regulatory region sequence-specific DNA binding"/>
    <property type="evidence" value="ECO:0000318"/>
    <property type="project" value="GO_Central"/>
</dbReference>
<dbReference type="GO" id="GO:0008270">
    <property type="term" value="F:zinc ion binding"/>
    <property type="evidence" value="ECO:0007669"/>
    <property type="project" value="UniProtKB-KW"/>
</dbReference>
<dbReference type="GO" id="GO:0045893">
    <property type="term" value="P:positive regulation of DNA-templated transcription"/>
    <property type="evidence" value="ECO:0000250"/>
    <property type="project" value="UniProtKB"/>
</dbReference>
<dbReference type="GO" id="GO:0006357">
    <property type="term" value="P:regulation of transcription by RNA polymerase II"/>
    <property type="evidence" value="ECO:0000318"/>
    <property type="project" value="GO_Central"/>
</dbReference>
<dbReference type="CDD" id="cd11606">
    <property type="entry name" value="COE_DBD"/>
    <property type="match status" value="1"/>
</dbReference>
<dbReference type="CDD" id="cd01175">
    <property type="entry name" value="IPT_COE"/>
    <property type="match status" value="1"/>
</dbReference>
<dbReference type="FunFam" id="1.10.287.4280:FF:000001">
    <property type="entry name" value="transcription factor COE1 isoform X2"/>
    <property type="match status" value="1"/>
</dbReference>
<dbReference type="FunFam" id="2.60.40.3180:FF:000001">
    <property type="entry name" value="transcription factor COE1 isoform X2"/>
    <property type="match status" value="1"/>
</dbReference>
<dbReference type="FunFam" id="2.60.40.10:FF:001696">
    <property type="entry name" value="Transcription factor COE3"/>
    <property type="match status" value="1"/>
</dbReference>
<dbReference type="Gene3D" id="1.10.287.4280">
    <property type="match status" value="1"/>
</dbReference>
<dbReference type="Gene3D" id="2.60.40.10">
    <property type="entry name" value="Immunoglobulins"/>
    <property type="match status" value="1"/>
</dbReference>
<dbReference type="Gene3D" id="2.60.40.3180">
    <property type="entry name" value="Transcription factor COE1, DNA-binding domain"/>
    <property type="match status" value="1"/>
</dbReference>
<dbReference type="InterPro" id="IPR032200">
    <property type="entry name" value="COE_DBD"/>
</dbReference>
<dbReference type="InterPro" id="IPR038173">
    <property type="entry name" value="COE_DBD_sf"/>
</dbReference>
<dbReference type="InterPro" id="IPR032201">
    <property type="entry name" value="COE_HLH"/>
</dbReference>
<dbReference type="InterPro" id="IPR038006">
    <property type="entry name" value="COE_IPT"/>
</dbReference>
<dbReference type="InterPro" id="IPR013783">
    <property type="entry name" value="Ig-like_fold"/>
</dbReference>
<dbReference type="InterPro" id="IPR014756">
    <property type="entry name" value="Ig_E-set"/>
</dbReference>
<dbReference type="InterPro" id="IPR002909">
    <property type="entry name" value="IPT_dom"/>
</dbReference>
<dbReference type="InterPro" id="IPR003523">
    <property type="entry name" value="Transcription_factor_COE"/>
</dbReference>
<dbReference type="InterPro" id="IPR018350">
    <property type="entry name" value="Transcription_factor_COE_CS"/>
</dbReference>
<dbReference type="PANTHER" id="PTHR10747">
    <property type="entry name" value="TRANSCRIPTION FACTOR COE FAMILY MEMBER"/>
    <property type="match status" value="1"/>
</dbReference>
<dbReference type="Pfam" id="PF16422">
    <property type="entry name" value="COE1_DBD"/>
    <property type="match status" value="1"/>
</dbReference>
<dbReference type="Pfam" id="PF16423">
    <property type="entry name" value="COE1_HLH"/>
    <property type="match status" value="1"/>
</dbReference>
<dbReference type="Pfam" id="PF01833">
    <property type="entry name" value="TIG"/>
    <property type="match status" value="1"/>
</dbReference>
<dbReference type="SMART" id="SM00429">
    <property type="entry name" value="IPT"/>
    <property type="match status" value="1"/>
</dbReference>
<dbReference type="SUPFAM" id="SSF81296">
    <property type="entry name" value="E set domains"/>
    <property type="match status" value="1"/>
</dbReference>
<dbReference type="PROSITE" id="PS01345">
    <property type="entry name" value="COE"/>
    <property type="match status" value="1"/>
</dbReference>
<name>COE3_XENLA</name>